<accession>Q5HH10</accession>
<sequence>MNVLVIGAGGREHALAYKLNQSNLVKQVFVIPGNEAMTPIAEVHTEISEPDHQAILDFAKRQNVDWVVIGPEQPLIDGLADILRANGFKVFGPNKQAAQIEGSKLFAKKIMEKYNIPTADYKEVERKKDALTYIENCELPVVVKKDGLAAGKGVIIADTIEAARSAIEIMYGDEEEGTVVFETFLEGEEFSLMTFVNGDLAVPFDCIAQDHKRAFDHDEGPNTGGMGAYCPVPHISDDVLKLTNETIAQPIAKAMLNEGYQFFGVLYIGAILTKDGPKVIEFNARFGDPEAQVLLSRMESDLMQHIIDLDEGKRTEFKWKNESIVGVMLASKGYPDAYEKGHKVSGFDLNENYFVSGLKKQGDTFVTSGGRVILAIGKGDNVQDAQRDAYKKVSQIQSDHLFYRHDIANKALQLK</sequence>
<evidence type="ECO:0000250" key="1"/>
<evidence type="ECO:0000255" key="2">
    <source>
        <dbReference type="HAMAP-Rule" id="MF_00138"/>
    </source>
</evidence>
<keyword id="KW-0067">ATP-binding</keyword>
<keyword id="KW-0436">Ligase</keyword>
<keyword id="KW-0460">Magnesium</keyword>
<keyword id="KW-0464">Manganese</keyword>
<keyword id="KW-0479">Metal-binding</keyword>
<keyword id="KW-0547">Nucleotide-binding</keyword>
<keyword id="KW-0658">Purine biosynthesis</keyword>
<gene>
    <name evidence="2" type="primary">purD</name>
    <name type="ordered locus">SACOL1083</name>
</gene>
<dbReference type="EC" id="6.3.4.13" evidence="2"/>
<dbReference type="EMBL" id="CP000046">
    <property type="protein sequence ID" value="AAW37963.1"/>
    <property type="molecule type" value="Genomic_DNA"/>
</dbReference>
<dbReference type="RefSeq" id="WP_001101903.1">
    <property type="nucleotide sequence ID" value="NZ_JBGOFO010000002.1"/>
</dbReference>
<dbReference type="SMR" id="Q5HH10"/>
<dbReference type="KEGG" id="sac:SACOL1083"/>
<dbReference type="HOGENOM" id="CLU_027420_3_1_9"/>
<dbReference type="UniPathway" id="UPA00074">
    <property type="reaction ID" value="UER00125"/>
</dbReference>
<dbReference type="Proteomes" id="UP000000530">
    <property type="component" value="Chromosome"/>
</dbReference>
<dbReference type="GO" id="GO:0005524">
    <property type="term" value="F:ATP binding"/>
    <property type="evidence" value="ECO:0007669"/>
    <property type="project" value="UniProtKB-KW"/>
</dbReference>
<dbReference type="GO" id="GO:0046872">
    <property type="term" value="F:metal ion binding"/>
    <property type="evidence" value="ECO:0007669"/>
    <property type="project" value="UniProtKB-KW"/>
</dbReference>
<dbReference type="GO" id="GO:0004637">
    <property type="term" value="F:phosphoribosylamine-glycine ligase activity"/>
    <property type="evidence" value="ECO:0007669"/>
    <property type="project" value="UniProtKB-UniRule"/>
</dbReference>
<dbReference type="GO" id="GO:0006189">
    <property type="term" value="P:'de novo' IMP biosynthetic process"/>
    <property type="evidence" value="ECO:0007669"/>
    <property type="project" value="UniProtKB-UniRule"/>
</dbReference>
<dbReference type="GO" id="GO:0009113">
    <property type="term" value="P:purine nucleobase biosynthetic process"/>
    <property type="evidence" value="ECO:0007669"/>
    <property type="project" value="InterPro"/>
</dbReference>
<dbReference type="FunFam" id="3.40.50.20:FF:000006">
    <property type="entry name" value="Phosphoribosylamine--glycine ligase, chloroplastic"/>
    <property type="match status" value="1"/>
</dbReference>
<dbReference type="Gene3D" id="3.40.50.20">
    <property type="match status" value="1"/>
</dbReference>
<dbReference type="Gene3D" id="3.30.1490.20">
    <property type="entry name" value="ATP-grasp fold, A domain"/>
    <property type="match status" value="1"/>
</dbReference>
<dbReference type="Gene3D" id="3.30.470.20">
    <property type="entry name" value="ATP-grasp fold, B domain"/>
    <property type="match status" value="1"/>
</dbReference>
<dbReference type="Gene3D" id="3.90.600.10">
    <property type="entry name" value="Phosphoribosylglycinamide synthetase, C-terminal domain"/>
    <property type="match status" value="1"/>
</dbReference>
<dbReference type="HAMAP" id="MF_00138">
    <property type="entry name" value="GARS"/>
    <property type="match status" value="1"/>
</dbReference>
<dbReference type="InterPro" id="IPR011761">
    <property type="entry name" value="ATP-grasp"/>
</dbReference>
<dbReference type="InterPro" id="IPR013815">
    <property type="entry name" value="ATP_grasp_subdomain_1"/>
</dbReference>
<dbReference type="InterPro" id="IPR016185">
    <property type="entry name" value="PreATP-grasp_dom_sf"/>
</dbReference>
<dbReference type="InterPro" id="IPR020561">
    <property type="entry name" value="PRibGlycinamid_synth_ATP-grasp"/>
</dbReference>
<dbReference type="InterPro" id="IPR000115">
    <property type="entry name" value="PRibGlycinamide_synth"/>
</dbReference>
<dbReference type="InterPro" id="IPR020560">
    <property type="entry name" value="PRibGlycinamide_synth_C-dom"/>
</dbReference>
<dbReference type="InterPro" id="IPR037123">
    <property type="entry name" value="PRibGlycinamide_synth_C_sf"/>
</dbReference>
<dbReference type="InterPro" id="IPR020559">
    <property type="entry name" value="PRibGlycinamide_synth_CS"/>
</dbReference>
<dbReference type="InterPro" id="IPR020562">
    <property type="entry name" value="PRibGlycinamide_synth_N"/>
</dbReference>
<dbReference type="InterPro" id="IPR011054">
    <property type="entry name" value="Rudment_hybrid_motif"/>
</dbReference>
<dbReference type="NCBIfam" id="TIGR00877">
    <property type="entry name" value="purD"/>
    <property type="match status" value="1"/>
</dbReference>
<dbReference type="PANTHER" id="PTHR43472">
    <property type="entry name" value="PHOSPHORIBOSYLAMINE--GLYCINE LIGASE"/>
    <property type="match status" value="1"/>
</dbReference>
<dbReference type="PANTHER" id="PTHR43472:SF1">
    <property type="entry name" value="PHOSPHORIBOSYLAMINE--GLYCINE LIGASE, CHLOROPLASTIC"/>
    <property type="match status" value="1"/>
</dbReference>
<dbReference type="Pfam" id="PF01071">
    <property type="entry name" value="GARS_A"/>
    <property type="match status" value="1"/>
</dbReference>
<dbReference type="Pfam" id="PF02843">
    <property type="entry name" value="GARS_C"/>
    <property type="match status" value="1"/>
</dbReference>
<dbReference type="Pfam" id="PF02844">
    <property type="entry name" value="GARS_N"/>
    <property type="match status" value="1"/>
</dbReference>
<dbReference type="SMART" id="SM01209">
    <property type="entry name" value="GARS_A"/>
    <property type="match status" value="1"/>
</dbReference>
<dbReference type="SMART" id="SM01210">
    <property type="entry name" value="GARS_C"/>
    <property type="match status" value="1"/>
</dbReference>
<dbReference type="SUPFAM" id="SSF56059">
    <property type="entry name" value="Glutathione synthetase ATP-binding domain-like"/>
    <property type="match status" value="1"/>
</dbReference>
<dbReference type="SUPFAM" id="SSF52440">
    <property type="entry name" value="PreATP-grasp domain"/>
    <property type="match status" value="1"/>
</dbReference>
<dbReference type="SUPFAM" id="SSF51246">
    <property type="entry name" value="Rudiment single hybrid motif"/>
    <property type="match status" value="1"/>
</dbReference>
<dbReference type="PROSITE" id="PS50975">
    <property type="entry name" value="ATP_GRASP"/>
    <property type="match status" value="1"/>
</dbReference>
<dbReference type="PROSITE" id="PS00184">
    <property type="entry name" value="GARS"/>
    <property type="match status" value="1"/>
</dbReference>
<organism>
    <name type="scientific">Staphylococcus aureus (strain COL)</name>
    <dbReference type="NCBI Taxonomy" id="93062"/>
    <lineage>
        <taxon>Bacteria</taxon>
        <taxon>Bacillati</taxon>
        <taxon>Bacillota</taxon>
        <taxon>Bacilli</taxon>
        <taxon>Bacillales</taxon>
        <taxon>Staphylococcaceae</taxon>
        <taxon>Staphylococcus</taxon>
    </lineage>
</organism>
<name>PUR2_STAAC</name>
<comment type="catalytic activity">
    <reaction evidence="2">
        <text>5-phospho-beta-D-ribosylamine + glycine + ATP = N(1)-(5-phospho-beta-D-ribosyl)glycinamide + ADP + phosphate + H(+)</text>
        <dbReference type="Rhea" id="RHEA:17453"/>
        <dbReference type="ChEBI" id="CHEBI:15378"/>
        <dbReference type="ChEBI" id="CHEBI:30616"/>
        <dbReference type="ChEBI" id="CHEBI:43474"/>
        <dbReference type="ChEBI" id="CHEBI:57305"/>
        <dbReference type="ChEBI" id="CHEBI:58681"/>
        <dbReference type="ChEBI" id="CHEBI:143788"/>
        <dbReference type="ChEBI" id="CHEBI:456216"/>
        <dbReference type="EC" id="6.3.4.13"/>
    </reaction>
</comment>
<comment type="cofactor">
    <cofactor evidence="1">
        <name>Mg(2+)</name>
        <dbReference type="ChEBI" id="CHEBI:18420"/>
    </cofactor>
    <cofactor evidence="1">
        <name>Mn(2+)</name>
        <dbReference type="ChEBI" id="CHEBI:29035"/>
    </cofactor>
    <text evidence="1">Binds 1 Mg(2+) or Mn(2+) ion per subunit.</text>
</comment>
<comment type="pathway">
    <text evidence="2">Purine metabolism; IMP biosynthesis via de novo pathway; N(1)-(5-phospho-D-ribosyl)glycinamide from 5-phospho-alpha-D-ribose 1-diphosphate: step 2/2.</text>
</comment>
<comment type="similarity">
    <text evidence="2">Belongs to the GARS family.</text>
</comment>
<reference key="1">
    <citation type="journal article" date="2005" name="J. Bacteriol.">
        <title>Insights on evolution of virulence and resistance from the complete genome analysis of an early methicillin-resistant Staphylococcus aureus strain and a biofilm-producing methicillin-resistant Staphylococcus epidermidis strain.</title>
        <authorList>
            <person name="Gill S.R."/>
            <person name="Fouts D.E."/>
            <person name="Archer G.L."/>
            <person name="Mongodin E.F."/>
            <person name="DeBoy R.T."/>
            <person name="Ravel J."/>
            <person name="Paulsen I.T."/>
            <person name="Kolonay J.F."/>
            <person name="Brinkac L.M."/>
            <person name="Beanan M.J."/>
            <person name="Dodson R.J."/>
            <person name="Daugherty S.C."/>
            <person name="Madupu R."/>
            <person name="Angiuoli S.V."/>
            <person name="Durkin A.S."/>
            <person name="Haft D.H."/>
            <person name="Vamathevan J.J."/>
            <person name="Khouri H."/>
            <person name="Utterback T.R."/>
            <person name="Lee C."/>
            <person name="Dimitrov G."/>
            <person name="Jiang L."/>
            <person name="Qin H."/>
            <person name="Weidman J."/>
            <person name="Tran K."/>
            <person name="Kang K.H."/>
            <person name="Hance I.R."/>
            <person name="Nelson K.E."/>
            <person name="Fraser C.M."/>
        </authorList>
    </citation>
    <scope>NUCLEOTIDE SEQUENCE [LARGE SCALE GENOMIC DNA]</scope>
    <source>
        <strain>COL</strain>
    </source>
</reference>
<proteinExistence type="inferred from homology"/>
<feature type="chain" id="PRO_0000151478" description="Phosphoribosylamine--glycine ligase">
    <location>
        <begin position="1"/>
        <end position="415"/>
    </location>
</feature>
<feature type="domain" description="ATP-grasp" evidence="2">
    <location>
        <begin position="108"/>
        <end position="311"/>
    </location>
</feature>
<feature type="binding site" evidence="2">
    <location>
        <begin position="134"/>
        <end position="191"/>
    </location>
    <ligand>
        <name>ATP</name>
        <dbReference type="ChEBI" id="CHEBI:30616"/>
    </ligand>
</feature>
<feature type="binding site" evidence="2">
    <location>
        <position position="281"/>
    </location>
    <ligand>
        <name>Mg(2+)</name>
        <dbReference type="ChEBI" id="CHEBI:18420"/>
    </ligand>
</feature>
<feature type="binding site" evidence="2">
    <location>
        <position position="283"/>
    </location>
    <ligand>
        <name>Mg(2+)</name>
        <dbReference type="ChEBI" id="CHEBI:18420"/>
    </ligand>
</feature>
<protein>
    <recommendedName>
        <fullName evidence="2">Phosphoribosylamine--glycine ligase</fullName>
        <ecNumber evidence="2">6.3.4.13</ecNumber>
    </recommendedName>
    <alternativeName>
        <fullName evidence="2">GARS</fullName>
    </alternativeName>
    <alternativeName>
        <fullName evidence="2">Glycinamide ribonucleotide synthetase</fullName>
    </alternativeName>
    <alternativeName>
        <fullName evidence="2">Phosphoribosylglycinamide synthetase</fullName>
    </alternativeName>
</protein>